<evidence type="ECO:0000250" key="1"/>
<evidence type="ECO:0000250" key="2">
    <source>
        <dbReference type="UniProtKB" id="Q13415"/>
    </source>
</evidence>
<evidence type="ECO:0000250" key="3">
    <source>
        <dbReference type="UniProtKB" id="Q9Z1N2"/>
    </source>
</evidence>
<evidence type="ECO:0000255" key="4">
    <source>
        <dbReference type="PROSITE-ProRule" id="PRU00370"/>
    </source>
</evidence>
<evidence type="ECO:0000256" key="5">
    <source>
        <dbReference type="SAM" id="MobiDB-lite"/>
    </source>
</evidence>
<evidence type="ECO:0000305" key="6"/>
<gene>
    <name type="primary">ORC1</name>
    <name type="synonym">ORC1L</name>
</gene>
<proteinExistence type="evidence at transcript level"/>
<accession>Q58DC8</accession>
<accession>A2VDN4</accession>
<dbReference type="EMBL" id="BT021669">
    <property type="protein sequence ID" value="AAX46516.1"/>
    <property type="molecule type" value="mRNA"/>
</dbReference>
<dbReference type="EMBL" id="BC133326">
    <property type="protein sequence ID" value="AAI33327.1"/>
    <property type="molecule type" value="mRNA"/>
</dbReference>
<dbReference type="RefSeq" id="NP_001014918.1">
    <property type="nucleotide sequence ID" value="NM_001014918.1"/>
</dbReference>
<dbReference type="RefSeq" id="XP_015320898.1">
    <property type="nucleotide sequence ID" value="XM_015465412.1"/>
</dbReference>
<dbReference type="SMR" id="Q58DC8"/>
<dbReference type="DIP" id="DIP-59665N"/>
<dbReference type="FunCoup" id="Q58DC8">
    <property type="interactions" value="477"/>
</dbReference>
<dbReference type="STRING" id="9913.ENSBTAP00000048350"/>
<dbReference type="PaxDb" id="9913-ENSBTAP00000003523"/>
<dbReference type="GeneID" id="513523"/>
<dbReference type="KEGG" id="bta:513523"/>
<dbReference type="CTD" id="4998"/>
<dbReference type="eggNOG" id="KOG1514">
    <property type="taxonomic scope" value="Eukaryota"/>
</dbReference>
<dbReference type="HOGENOM" id="CLU_012774_0_1_1"/>
<dbReference type="InParanoid" id="Q58DC8"/>
<dbReference type="OrthoDB" id="1926878at2759"/>
<dbReference type="Proteomes" id="UP000009136">
    <property type="component" value="Unplaced"/>
</dbReference>
<dbReference type="GO" id="GO:0005664">
    <property type="term" value="C:nuclear origin of replication recognition complex"/>
    <property type="evidence" value="ECO:0000250"/>
    <property type="project" value="UniProtKB"/>
</dbReference>
<dbReference type="GO" id="GO:0005524">
    <property type="term" value="F:ATP binding"/>
    <property type="evidence" value="ECO:0007669"/>
    <property type="project" value="UniProtKB-KW"/>
</dbReference>
<dbReference type="GO" id="GO:0016887">
    <property type="term" value="F:ATP hydrolysis activity"/>
    <property type="evidence" value="ECO:0007669"/>
    <property type="project" value="InterPro"/>
</dbReference>
<dbReference type="GO" id="GO:0003682">
    <property type="term" value="F:chromatin binding"/>
    <property type="evidence" value="ECO:0007669"/>
    <property type="project" value="InterPro"/>
</dbReference>
<dbReference type="GO" id="GO:0003688">
    <property type="term" value="F:DNA replication origin binding"/>
    <property type="evidence" value="ECO:0000318"/>
    <property type="project" value="GO_Central"/>
</dbReference>
<dbReference type="GO" id="GO:0046872">
    <property type="term" value="F:metal ion binding"/>
    <property type="evidence" value="ECO:0007669"/>
    <property type="project" value="UniProtKB-KW"/>
</dbReference>
<dbReference type="GO" id="GO:0006270">
    <property type="term" value="P:DNA replication initiation"/>
    <property type="evidence" value="ECO:0000318"/>
    <property type="project" value="GO_Central"/>
</dbReference>
<dbReference type="GO" id="GO:0033314">
    <property type="term" value="P:mitotic DNA replication checkpoint signaling"/>
    <property type="evidence" value="ECO:0000318"/>
    <property type="project" value="GO_Central"/>
</dbReference>
<dbReference type="CDD" id="cd04719">
    <property type="entry name" value="BAH_Orc1p_animal"/>
    <property type="match status" value="1"/>
</dbReference>
<dbReference type="CDD" id="cd08768">
    <property type="entry name" value="Cdc6_C"/>
    <property type="match status" value="1"/>
</dbReference>
<dbReference type="FunFam" id="1.10.8.60:FF:000062">
    <property type="entry name" value="Origin recognition complex subunit 1"/>
    <property type="match status" value="1"/>
</dbReference>
<dbReference type="FunFam" id="2.30.30.490:FF:000010">
    <property type="entry name" value="Origin recognition complex subunit 1"/>
    <property type="match status" value="1"/>
</dbReference>
<dbReference type="FunFam" id="3.40.50.300:FF:000199">
    <property type="entry name" value="Origin recognition complex subunit 1"/>
    <property type="match status" value="1"/>
</dbReference>
<dbReference type="Gene3D" id="1.10.8.60">
    <property type="match status" value="1"/>
</dbReference>
<dbReference type="Gene3D" id="2.30.30.490">
    <property type="match status" value="1"/>
</dbReference>
<dbReference type="Gene3D" id="3.40.50.300">
    <property type="entry name" value="P-loop containing nucleotide triphosphate hydrolases"/>
    <property type="match status" value="1"/>
</dbReference>
<dbReference type="InterPro" id="IPR003593">
    <property type="entry name" value="AAA+_ATPase"/>
</dbReference>
<dbReference type="InterPro" id="IPR041083">
    <property type="entry name" value="AAA_lid_10"/>
</dbReference>
<dbReference type="InterPro" id="IPR003959">
    <property type="entry name" value="ATPase_AAA_core"/>
</dbReference>
<dbReference type="InterPro" id="IPR001025">
    <property type="entry name" value="BAH_dom"/>
</dbReference>
<dbReference type="InterPro" id="IPR043151">
    <property type="entry name" value="BAH_sf"/>
</dbReference>
<dbReference type="InterPro" id="IPR015163">
    <property type="entry name" value="Cdc6_C"/>
</dbReference>
<dbReference type="InterPro" id="IPR050311">
    <property type="entry name" value="ORC1/CDC6"/>
</dbReference>
<dbReference type="InterPro" id="IPR027417">
    <property type="entry name" value="P-loop_NTPase"/>
</dbReference>
<dbReference type="PANTHER" id="PTHR10763">
    <property type="entry name" value="CELL DIVISION CONTROL PROTEIN 6-RELATED"/>
    <property type="match status" value="1"/>
</dbReference>
<dbReference type="PANTHER" id="PTHR10763:SF23">
    <property type="entry name" value="ORIGIN RECOGNITION COMPLEX SUBUNIT 1"/>
    <property type="match status" value="1"/>
</dbReference>
<dbReference type="Pfam" id="PF00004">
    <property type="entry name" value="AAA"/>
    <property type="match status" value="1"/>
</dbReference>
<dbReference type="Pfam" id="PF17872">
    <property type="entry name" value="AAA_lid_10"/>
    <property type="match status" value="1"/>
</dbReference>
<dbReference type="Pfam" id="PF01426">
    <property type="entry name" value="BAH"/>
    <property type="match status" value="1"/>
</dbReference>
<dbReference type="Pfam" id="PF09079">
    <property type="entry name" value="Cdc6_C"/>
    <property type="match status" value="1"/>
</dbReference>
<dbReference type="SMART" id="SM00382">
    <property type="entry name" value="AAA"/>
    <property type="match status" value="1"/>
</dbReference>
<dbReference type="SMART" id="SM00439">
    <property type="entry name" value="BAH"/>
    <property type="match status" value="1"/>
</dbReference>
<dbReference type="SMART" id="SM01074">
    <property type="entry name" value="Cdc6_C"/>
    <property type="match status" value="1"/>
</dbReference>
<dbReference type="SUPFAM" id="SSF52540">
    <property type="entry name" value="P-loop containing nucleoside triphosphate hydrolases"/>
    <property type="match status" value="1"/>
</dbReference>
<dbReference type="PROSITE" id="PS51038">
    <property type="entry name" value="BAH"/>
    <property type="match status" value="1"/>
</dbReference>
<reference key="1">
    <citation type="journal article" date="2005" name="BMC Genomics">
        <title>Characterization of 954 bovine full-CDS cDNA sequences.</title>
        <authorList>
            <person name="Harhay G.P."/>
            <person name="Sonstegard T.S."/>
            <person name="Keele J.W."/>
            <person name="Heaton M.P."/>
            <person name="Clawson M.L."/>
            <person name="Snelling W.M."/>
            <person name="Wiedmann R.T."/>
            <person name="Van Tassell C.P."/>
            <person name="Smith T.P.L."/>
        </authorList>
    </citation>
    <scope>NUCLEOTIDE SEQUENCE [LARGE SCALE MRNA]</scope>
</reference>
<reference key="2">
    <citation type="submission" date="2007-02" db="EMBL/GenBank/DDBJ databases">
        <authorList>
            <consortium name="NIH - Mammalian Gene Collection (MGC) project"/>
        </authorList>
    </citation>
    <scope>NUCLEOTIDE SEQUENCE [LARGE SCALE MRNA]</scope>
    <source>
        <strain>Hereford</strain>
        <tissue>Fetal skin</tissue>
    </source>
</reference>
<organism>
    <name type="scientific">Bos taurus</name>
    <name type="common">Bovine</name>
    <dbReference type="NCBI Taxonomy" id="9913"/>
    <lineage>
        <taxon>Eukaryota</taxon>
        <taxon>Metazoa</taxon>
        <taxon>Chordata</taxon>
        <taxon>Craniata</taxon>
        <taxon>Vertebrata</taxon>
        <taxon>Euteleostomi</taxon>
        <taxon>Mammalia</taxon>
        <taxon>Eutheria</taxon>
        <taxon>Laurasiatheria</taxon>
        <taxon>Artiodactyla</taxon>
        <taxon>Ruminantia</taxon>
        <taxon>Pecora</taxon>
        <taxon>Bovidae</taxon>
        <taxon>Bovinae</taxon>
        <taxon>Bos</taxon>
    </lineage>
</organism>
<feature type="chain" id="PRO_0000245347" description="Origin recognition complex subunit 1">
    <location>
        <begin position="1"/>
        <end position="863"/>
    </location>
</feature>
<feature type="domain" description="BAH" evidence="4">
    <location>
        <begin position="45"/>
        <end position="171"/>
    </location>
</feature>
<feature type="region of interest" description="Disordered" evidence="5">
    <location>
        <begin position="186"/>
        <end position="261"/>
    </location>
</feature>
<feature type="region of interest" description="Disordered" evidence="5">
    <location>
        <begin position="274"/>
        <end position="315"/>
    </location>
</feature>
<feature type="region of interest" description="Disordered" evidence="5">
    <location>
        <begin position="401"/>
        <end position="482"/>
    </location>
</feature>
<feature type="region of interest" description="Necessary and sufficient for ORC complex assembly" evidence="1">
    <location>
        <begin position="503"/>
        <end position="863"/>
    </location>
</feature>
<feature type="compositionally biased region" description="Polar residues" evidence="5">
    <location>
        <begin position="193"/>
        <end position="206"/>
    </location>
</feature>
<feature type="compositionally biased region" description="Basic and acidic residues" evidence="5">
    <location>
        <begin position="207"/>
        <end position="216"/>
    </location>
</feature>
<feature type="compositionally biased region" description="Basic and acidic residues" evidence="5">
    <location>
        <begin position="295"/>
        <end position="315"/>
    </location>
</feature>
<feature type="compositionally biased region" description="Acidic residues" evidence="5">
    <location>
        <begin position="419"/>
        <end position="428"/>
    </location>
</feature>
<feature type="compositionally biased region" description="Polar residues" evidence="5">
    <location>
        <begin position="429"/>
        <end position="449"/>
    </location>
</feature>
<feature type="compositionally biased region" description="Basic and acidic residues" evidence="5">
    <location>
        <begin position="462"/>
        <end position="474"/>
    </location>
</feature>
<feature type="binding site" evidence="2">
    <location>
        <position position="502"/>
    </location>
    <ligand>
        <name>ATP</name>
        <dbReference type="ChEBI" id="CHEBI:30616"/>
    </ligand>
</feature>
<feature type="binding site" evidence="2">
    <location>
        <begin position="536"/>
        <end position="544"/>
    </location>
    <ligand>
        <name>ATP</name>
        <dbReference type="ChEBI" id="CHEBI:30616"/>
    </ligand>
</feature>
<feature type="binding site" evidence="2">
    <location>
        <position position="622"/>
    </location>
    <ligand>
        <name>Mg(2+)</name>
        <dbReference type="ChEBI" id="CHEBI:18420"/>
    </ligand>
</feature>
<feature type="binding site" evidence="2">
    <location>
        <position position="623"/>
    </location>
    <ligand>
        <name>ATP</name>
        <dbReference type="ChEBI" id="CHEBI:30616"/>
    </ligand>
</feature>
<feature type="binding site" evidence="2">
    <location>
        <position position="623"/>
    </location>
    <ligand>
        <name>Mg(2+)</name>
        <dbReference type="ChEBI" id="CHEBI:18420"/>
    </ligand>
</feature>
<feature type="binding site" evidence="2">
    <location>
        <position position="656"/>
    </location>
    <ligand>
        <name>ATP</name>
        <dbReference type="ChEBI" id="CHEBI:30616"/>
    </ligand>
</feature>
<feature type="binding site" evidence="2">
    <location>
        <position position="722"/>
    </location>
    <ligand>
        <name>ATP</name>
        <dbReference type="ChEBI" id="CHEBI:30616"/>
    </ligand>
</feature>
<feature type="site" description="Histone H4K20me2 binding" evidence="3">
    <location>
        <position position="94"/>
    </location>
</feature>
<feature type="modified residue" description="Phosphoserine" evidence="2">
    <location>
        <position position="199"/>
    </location>
</feature>
<feature type="modified residue" description="Phosphothreonine" evidence="2">
    <location>
        <position position="203"/>
    </location>
</feature>
<feature type="modified residue" description="Phosphoserine" evidence="3">
    <location>
        <position position="255"/>
    </location>
</feature>
<feature type="modified residue" description="Phosphoserine" evidence="3">
    <location>
        <position position="258"/>
    </location>
</feature>
<feature type="modified residue" description="Phosphoserine" evidence="2">
    <location>
        <position position="276"/>
    </location>
</feature>
<feature type="modified residue" description="Phosphoserine" evidence="2">
    <location>
        <position position="290"/>
    </location>
</feature>
<feature type="modified residue" description="N6-acetyllysine" evidence="2">
    <location>
        <position position="329"/>
    </location>
</feature>
<feature type="modified residue" description="Phosphothreonine" evidence="2">
    <location>
        <position position="340"/>
    </location>
</feature>
<feature type="modified residue" description="Phosphoserine" evidence="2">
    <location>
        <position position="419"/>
    </location>
</feature>
<feature type="sequence conflict" description="In Ref. 2; AAI33327." evidence="6" ref="2">
    <original>D</original>
    <variation>G</variation>
    <location>
        <position position="40"/>
    </location>
</feature>
<feature type="sequence conflict" description="In Ref. 1; AAX46516." evidence="6" ref="1">
    <original>D</original>
    <variation>E</variation>
    <location>
        <position position="640"/>
    </location>
</feature>
<feature type="sequence conflict" description="In Ref. 2; AAI33327." evidence="6" ref="2">
    <original>V</original>
    <variation>F</variation>
    <location>
        <position position="774"/>
    </location>
</feature>
<feature type="sequence conflict" description="In Ref. 1; AAX46516." evidence="6" ref="1">
    <original>EE</original>
    <variation>RSEGLHKEG</variation>
    <location>
        <begin position="862"/>
        <end position="863"/>
    </location>
</feature>
<protein>
    <recommendedName>
        <fullName>Origin recognition complex subunit 1</fullName>
    </recommendedName>
</protein>
<name>ORC1_BOVIN</name>
<comment type="function">
    <text evidence="1">Component of the origin recognition complex (ORC) that binds origins of replication. DNA-binding is ATP-dependent. The specific DNA sequences that define origins of replication have not been identified yet. ORC is required to assemble the pre-replication complex necessary to initiate DNA replication (By similarity).</text>
</comment>
<comment type="subunit">
    <text evidence="1">Component of ORC, a complex composed of at least 6 subunits: ORC1, ORC2, ORC3, ORC4, ORC5 and ORC6. ORC is regulated in a cell-cycle dependent manner. It is sequentially assembled at the exit from anaphase of mitosis and disassembled as cells enter S phase (By similarity). Interacts with CDC6 and KAT7/HBO1 (By similarity). Interacts with LRWD1 predominantly during the G1 phase and with less affinity during mitosis, when phosphorylated (By similarity).</text>
</comment>
<comment type="subcellular location">
    <subcellularLocation>
        <location evidence="1">Nucleus</location>
    </subcellularLocation>
</comment>
<comment type="PTM">
    <text evidence="1">Phosphorylated during mitosis.</text>
</comment>
<comment type="similarity">
    <text evidence="6">Belongs to the ORC1 family.</text>
</comment>
<keyword id="KW-0007">Acetylation</keyword>
<keyword id="KW-0067">ATP-binding</keyword>
<keyword id="KW-0235">DNA replication</keyword>
<keyword id="KW-0238">DNA-binding</keyword>
<keyword id="KW-0460">Magnesium</keyword>
<keyword id="KW-0479">Metal-binding</keyword>
<keyword id="KW-0547">Nucleotide-binding</keyword>
<keyword id="KW-0539">Nucleus</keyword>
<keyword id="KW-0597">Phosphoprotein</keyword>
<keyword id="KW-1185">Reference proteome</keyword>
<sequence>MAYYSARLRTRQTYSWVGRPLLDQKLHYQTYKEMSMKREDYSTEIHIQVGQFVLIEGDDDENPYVAKLVELFEDDSELYSKKRARVQWFIRFCEVPVCKQHLLGRKPGTQEIFWYDNPTCNSNISVETIIGSVRVVALAPDEVMPIDLKNKKTFFVKLSWNEKKFKPLPPEVFAQLNKLQEDNHRYQKPMQAKTKSAESPSWTTTEHAVKRIESRHSTSKSRHTASHPVTPRARKRLELSSFPRTPNTRISPAASCASLDSPGRMKRKVAFSEVMSPSKRSLPDGFQTSSPALKAPEKTGEIQHSCTKDAKKTSPDHGMILRARAPALKITETSEERTLTPIGGGRKSSVVPSVILKPEYIKRREGKEPEVQDEAPSTSRIRRKSSVLTLNRIRQQLRFLGNSKSDENDEEFLPAAEISDCDSEEEEASTTPLPRRTPNSVSRNLRSSMKSSLQTPSKTPKKTPEPRTPRDATPRIRSRNLTAQGPTNMLEEARLRLHVAAVPESLPCREQEFQDIYNFVESKLLDQTGGCMYISGVPGTGKTATVHEVICCLQQAAQANEVPPFQYIEVNGMKLTEPHQVYVQILQKLTGKRATANHAAALLAKRFCTQGSSQETTVLLVDELDLLWTQKQDVMYNLFDWPTHKEARLVVLTIANTMDLPERIMMNRVSSRLGLTRMCFQPYTHSQLRQILLSRLRHVKAFEDDAIQLVARKVAALSGDARRCLDICRRATEICEFSCQKPDSPGLVTTAHLLEAIDEMFSSSYITAIKNSSVLEQSFLRAILAEFRRSGLEEATFQQVYIQHVALCRMEGLPYPTMSETMAVCSRLGACRLLLVEPSRNDVLRRVRLNVSQDDVLYALKEE</sequence>